<accession>P21884</accession>
<accession>Q45496</accession>
<dbReference type="EMBL" id="M57435">
    <property type="protein sequence ID" value="AAA62680.1"/>
    <property type="status" value="ALT_INIT"/>
    <property type="molecule type" value="Genomic_DNA"/>
</dbReference>
<dbReference type="EMBL" id="AF012285">
    <property type="protein sequence ID" value="AAC24931.1"/>
    <property type="status" value="ALT_INIT"/>
    <property type="molecule type" value="Genomic_DNA"/>
</dbReference>
<dbReference type="EMBL" id="AL009126">
    <property type="protein sequence ID" value="CAB13330.2"/>
    <property type="molecule type" value="Genomic_DNA"/>
</dbReference>
<dbReference type="PIR" id="D69870">
    <property type="entry name" value="D69870"/>
</dbReference>
<dbReference type="RefSeq" id="NP_389340.2">
    <property type="nucleotide sequence ID" value="NC_000964.3"/>
</dbReference>
<dbReference type="RefSeq" id="WP_009967146.1">
    <property type="nucleotide sequence ID" value="NZ_OZ025638.1"/>
</dbReference>
<dbReference type="SMR" id="P21884"/>
<dbReference type="FunCoup" id="P21884">
    <property type="interactions" value="14"/>
</dbReference>
<dbReference type="STRING" id="224308.BSU14570"/>
<dbReference type="PaxDb" id="224308-BSU14570"/>
<dbReference type="EnsemblBacteria" id="CAB13330">
    <property type="protein sequence ID" value="CAB13330"/>
    <property type="gene ID" value="BSU_14570"/>
</dbReference>
<dbReference type="GeneID" id="939487"/>
<dbReference type="KEGG" id="bsu:BSU14570"/>
<dbReference type="PATRIC" id="fig|224308.179.peg.1589"/>
<dbReference type="eggNOG" id="COG0497">
    <property type="taxonomic scope" value="Bacteria"/>
</dbReference>
<dbReference type="InParanoid" id="P21884"/>
<dbReference type="OrthoDB" id="2576511at2"/>
<dbReference type="PhylomeDB" id="P21884"/>
<dbReference type="BioCyc" id="BSUB:BSU14570-MONOMER"/>
<dbReference type="Proteomes" id="UP000001570">
    <property type="component" value="Chromosome"/>
</dbReference>
<dbReference type="GO" id="GO:0005886">
    <property type="term" value="C:plasma membrane"/>
    <property type="evidence" value="ECO:0007669"/>
    <property type="project" value="UniProtKB-SubCell"/>
</dbReference>
<dbReference type="Gene3D" id="1.20.120.570">
    <property type="entry name" value="YkyA-like"/>
    <property type="match status" value="1"/>
</dbReference>
<dbReference type="InterPro" id="IPR019454">
    <property type="entry name" value="Lipoprot_YkyA-like"/>
</dbReference>
<dbReference type="InterPro" id="IPR036785">
    <property type="entry name" value="YkyA-like_sf"/>
</dbReference>
<dbReference type="Pfam" id="PF10368">
    <property type="entry name" value="YkyA"/>
    <property type="match status" value="1"/>
</dbReference>
<dbReference type="SUPFAM" id="SSF140423">
    <property type="entry name" value="MW0975(SA0943)-like"/>
    <property type="match status" value="1"/>
</dbReference>
<dbReference type="PROSITE" id="PS51257">
    <property type="entry name" value="PROKAR_LIPOPROTEIN"/>
    <property type="match status" value="1"/>
</dbReference>
<proteinExistence type="inferred from homology"/>
<reference key="1">
    <citation type="journal article" date="1990" name="J. Bacteriol.">
        <title>Secretory S complex of Bacillus subtilis: sequence analysis and identity to pyruvate dehydrogenase.</title>
        <authorList>
            <person name="Hemilae H.O."/>
            <person name="Palva A."/>
            <person name="Paulin L."/>
            <person name="Arvidson S."/>
            <person name="Palva I."/>
        </authorList>
    </citation>
    <scope>NUCLEOTIDE SEQUENCE [GENOMIC DNA]</scope>
    <source>
        <strain>168</strain>
    </source>
</reference>
<reference key="2">
    <citation type="journal article" date="1996" name="Microbiology">
        <title>The ampS-nprE (124 degrees-127 degrees) region of the Bacillus subtilis 168 chromosome: sequencing of a 27 kb segment and identification of several genes in the area.</title>
        <authorList>
            <person name="Winters P."/>
            <person name="Caldwell R.M."/>
            <person name="Enfield L."/>
            <person name="Ferrari E."/>
        </authorList>
    </citation>
    <scope>NUCLEOTIDE SEQUENCE [GENOMIC DNA]</scope>
    <source>
        <strain>168</strain>
    </source>
</reference>
<reference key="3">
    <citation type="journal article" date="1997" name="Nature">
        <title>The complete genome sequence of the Gram-positive bacterium Bacillus subtilis.</title>
        <authorList>
            <person name="Kunst F."/>
            <person name="Ogasawara N."/>
            <person name="Moszer I."/>
            <person name="Albertini A.M."/>
            <person name="Alloni G."/>
            <person name="Azevedo V."/>
            <person name="Bertero M.G."/>
            <person name="Bessieres P."/>
            <person name="Bolotin A."/>
            <person name="Borchert S."/>
            <person name="Borriss R."/>
            <person name="Boursier L."/>
            <person name="Brans A."/>
            <person name="Braun M."/>
            <person name="Brignell S.C."/>
            <person name="Bron S."/>
            <person name="Brouillet S."/>
            <person name="Bruschi C.V."/>
            <person name="Caldwell B."/>
            <person name="Capuano V."/>
            <person name="Carter N.M."/>
            <person name="Choi S.-K."/>
            <person name="Codani J.-J."/>
            <person name="Connerton I.F."/>
            <person name="Cummings N.J."/>
            <person name="Daniel R.A."/>
            <person name="Denizot F."/>
            <person name="Devine K.M."/>
            <person name="Duesterhoeft A."/>
            <person name="Ehrlich S.D."/>
            <person name="Emmerson P.T."/>
            <person name="Entian K.-D."/>
            <person name="Errington J."/>
            <person name="Fabret C."/>
            <person name="Ferrari E."/>
            <person name="Foulger D."/>
            <person name="Fritz C."/>
            <person name="Fujita M."/>
            <person name="Fujita Y."/>
            <person name="Fuma S."/>
            <person name="Galizzi A."/>
            <person name="Galleron N."/>
            <person name="Ghim S.-Y."/>
            <person name="Glaser P."/>
            <person name="Goffeau A."/>
            <person name="Golightly E.J."/>
            <person name="Grandi G."/>
            <person name="Guiseppi G."/>
            <person name="Guy B.J."/>
            <person name="Haga K."/>
            <person name="Haiech J."/>
            <person name="Harwood C.R."/>
            <person name="Henaut A."/>
            <person name="Hilbert H."/>
            <person name="Holsappel S."/>
            <person name="Hosono S."/>
            <person name="Hullo M.-F."/>
            <person name="Itaya M."/>
            <person name="Jones L.-M."/>
            <person name="Joris B."/>
            <person name="Karamata D."/>
            <person name="Kasahara Y."/>
            <person name="Klaerr-Blanchard M."/>
            <person name="Klein C."/>
            <person name="Kobayashi Y."/>
            <person name="Koetter P."/>
            <person name="Koningstein G."/>
            <person name="Krogh S."/>
            <person name="Kumano M."/>
            <person name="Kurita K."/>
            <person name="Lapidus A."/>
            <person name="Lardinois S."/>
            <person name="Lauber J."/>
            <person name="Lazarevic V."/>
            <person name="Lee S.-M."/>
            <person name="Levine A."/>
            <person name="Liu H."/>
            <person name="Masuda S."/>
            <person name="Mauel C."/>
            <person name="Medigue C."/>
            <person name="Medina N."/>
            <person name="Mellado R.P."/>
            <person name="Mizuno M."/>
            <person name="Moestl D."/>
            <person name="Nakai S."/>
            <person name="Noback M."/>
            <person name="Noone D."/>
            <person name="O'Reilly M."/>
            <person name="Ogawa K."/>
            <person name="Ogiwara A."/>
            <person name="Oudega B."/>
            <person name="Park S.-H."/>
            <person name="Parro V."/>
            <person name="Pohl T.M."/>
            <person name="Portetelle D."/>
            <person name="Porwollik S."/>
            <person name="Prescott A.M."/>
            <person name="Presecan E."/>
            <person name="Pujic P."/>
            <person name="Purnelle B."/>
            <person name="Rapoport G."/>
            <person name="Rey M."/>
            <person name="Reynolds S."/>
            <person name="Rieger M."/>
            <person name="Rivolta C."/>
            <person name="Rocha E."/>
            <person name="Roche B."/>
            <person name="Rose M."/>
            <person name="Sadaie Y."/>
            <person name="Sato T."/>
            <person name="Scanlan E."/>
            <person name="Schleich S."/>
            <person name="Schroeter R."/>
            <person name="Scoffone F."/>
            <person name="Sekiguchi J."/>
            <person name="Sekowska A."/>
            <person name="Seror S.J."/>
            <person name="Serror P."/>
            <person name="Shin B.-S."/>
            <person name="Soldo B."/>
            <person name="Sorokin A."/>
            <person name="Tacconi E."/>
            <person name="Takagi T."/>
            <person name="Takahashi H."/>
            <person name="Takemaru K."/>
            <person name="Takeuchi M."/>
            <person name="Tamakoshi A."/>
            <person name="Tanaka T."/>
            <person name="Terpstra P."/>
            <person name="Tognoni A."/>
            <person name="Tosato V."/>
            <person name="Uchiyama S."/>
            <person name="Vandenbol M."/>
            <person name="Vannier F."/>
            <person name="Vassarotti A."/>
            <person name="Viari A."/>
            <person name="Wambutt R."/>
            <person name="Wedler E."/>
            <person name="Wedler H."/>
            <person name="Weitzenegger T."/>
            <person name="Winters P."/>
            <person name="Wipat A."/>
            <person name="Yamamoto H."/>
            <person name="Yamane K."/>
            <person name="Yasumoto K."/>
            <person name="Yata K."/>
            <person name="Yoshida K."/>
            <person name="Yoshikawa H.-F."/>
            <person name="Zumstein E."/>
            <person name="Yoshikawa H."/>
            <person name="Danchin A."/>
        </authorList>
    </citation>
    <scope>NUCLEOTIDE SEQUENCE [LARGE SCALE GENOMIC DNA]</scope>
    <source>
        <strain>168</strain>
    </source>
</reference>
<protein>
    <recommendedName>
        <fullName>Uncharacterized lipoprotein YkyA</fullName>
    </recommendedName>
</protein>
<gene>
    <name type="primary">ykyA</name>
    <name type="synonym">ykrC</name>
    <name type="ordered locus">BSU14570</name>
</gene>
<name>YKYA_BACSU</name>
<evidence type="ECO:0000255" key="1">
    <source>
        <dbReference type="PROSITE-ProRule" id="PRU00303"/>
    </source>
</evidence>
<evidence type="ECO:0000305" key="2"/>
<keyword id="KW-1003">Cell membrane</keyword>
<keyword id="KW-0449">Lipoprotein</keyword>
<keyword id="KW-0472">Membrane</keyword>
<keyword id="KW-0564">Palmitate</keyword>
<keyword id="KW-1185">Reference proteome</keyword>
<keyword id="KW-0732">Signal</keyword>
<sequence>MKDAIKRRPGIKIGAFCAMALILTGCMGQDPVDSLHHSLEKAAESEKPFQEEQNTLKELEAKENQLYDSVMKLNMDDYKKIVALSNKALENVSKREEHLKLENDSMKKSETEFEEAKTSAEHIKEKDIKEKADAAANHMEKRYTSYGTMYKEYKKALELNKKLYMQLKDKDLTRDDLDQQIDKVNASYEKILKYSGEFNEQTEKYNKAREDLYDAAGYRVKKS</sequence>
<organism>
    <name type="scientific">Bacillus subtilis (strain 168)</name>
    <dbReference type="NCBI Taxonomy" id="224308"/>
    <lineage>
        <taxon>Bacteria</taxon>
        <taxon>Bacillati</taxon>
        <taxon>Bacillota</taxon>
        <taxon>Bacilli</taxon>
        <taxon>Bacillales</taxon>
        <taxon>Bacillaceae</taxon>
        <taxon>Bacillus</taxon>
    </lineage>
</organism>
<feature type="signal peptide" evidence="1">
    <location>
        <begin position="1"/>
        <end position="25"/>
    </location>
</feature>
<feature type="chain" id="PRO_0000049612" description="Uncharacterized lipoprotein YkyA">
    <location>
        <begin position="26"/>
        <end position="223"/>
    </location>
</feature>
<feature type="lipid moiety-binding region" description="N-palmitoyl cysteine" evidence="1">
    <location>
        <position position="26"/>
    </location>
</feature>
<feature type="lipid moiety-binding region" description="S-diacylglycerol cysteine" evidence="1">
    <location>
        <position position="26"/>
    </location>
</feature>
<feature type="sequence conflict" description="In Ref. 1; AAA62680." evidence="2" ref="1">
    <original>R</original>
    <variation>H</variation>
    <location>
        <position position="95"/>
    </location>
</feature>
<comment type="subcellular location">
    <subcellularLocation>
        <location evidence="1">Cell membrane</location>
        <topology evidence="1">Lipid-anchor</topology>
    </subcellularLocation>
</comment>
<comment type="sequence caution" evidence="2">
    <conflict type="erroneous initiation">
        <sequence resource="EMBL-CDS" id="AAA62680"/>
    </conflict>
</comment>
<comment type="sequence caution" evidence="2">
    <conflict type="erroneous initiation">
        <sequence resource="EMBL-CDS" id="AAC24931"/>
    </conflict>
</comment>